<keyword id="KW-0002">3D-structure</keyword>
<keyword id="KW-0007">Acetylation</keyword>
<keyword id="KW-0025">Alternative splicing</keyword>
<keyword id="KW-0963">Cytoplasm</keyword>
<keyword id="KW-0206">Cytoskeleton</keyword>
<keyword id="KW-0217">Developmental protein</keyword>
<keyword id="KW-0488">Methylation</keyword>
<keyword id="KW-0597">Phosphoprotein</keyword>
<keyword id="KW-1267">Proteomics identification</keyword>
<keyword id="KW-1185">Reference proteome</keyword>
<keyword id="KW-0678">Repressor</keyword>
<keyword id="KW-0687">Ribonucleoprotein</keyword>
<keyword id="KW-0810">Translation regulation</keyword>
<evidence type="ECO:0000250" key="1">
    <source>
        <dbReference type="UniProtKB" id="A0A8M2"/>
    </source>
</evidence>
<evidence type="ECO:0000250" key="2">
    <source>
        <dbReference type="UniProtKB" id="Q8K2F8"/>
    </source>
</evidence>
<evidence type="ECO:0000255" key="3">
    <source>
        <dbReference type="PROSITE-ProRule" id="PRU00845"/>
    </source>
</evidence>
<evidence type="ECO:0000255" key="4">
    <source>
        <dbReference type="PROSITE-ProRule" id="PRU01346"/>
    </source>
</evidence>
<evidence type="ECO:0000256" key="5">
    <source>
        <dbReference type="SAM" id="MobiDB-lite"/>
    </source>
</evidence>
<evidence type="ECO:0000269" key="6">
    <source>
    </source>
</evidence>
<evidence type="ECO:0000269" key="7">
    <source>
    </source>
</evidence>
<evidence type="ECO:0000269" key="8">
    <source>
    </source>
</evidence>
<evidence type="ECO:0000269" key="9">
    <source>
    </source>
</evidence>
<evidence type="ECO:0000269" key="10">
    <source>
    </source>
</evidence>
<evidence type="ECO:0000269" key="11">
    <source>
    </source>
</evidence>
<evidence type="ECO:0000269" key="12">
    <source>
    </source>
</evidence>
<evidence type="ECO:0000269" key="13">
    <source>
    </source>
</evidence>
<evidence type="ECO:0000269" key="14">
    <source>
    </source>
</evidence>
<evidence type="ECO:0000269" key="15">
    <source>
    </source>
</evidence>
<evidence type="ECO:0000303" key="16">
    <source>
    </source>
</evidence>
<evidence type="ECO:0000303" key="17">
    <source>
    </source>
</evidence>
<evidence type="ECO:0000303" key="18">
    <source>
    </source>
</evidence>
<evidence type="ECO:0000303" key="19">
    <source>
    </source>
</evidence>
<evidence type="ECO:0000303" key="20">
    <source ref="1"/>
</evidence>
<evidence type="ECO:0000305" key="21"/>
<evidence type="ECO:0000312" key="22">
    <source>
        <dbReference type="HGNC" id="HGNC:24489"/>
    </source>
</evidence>
<evidence type="ECO:0007744" key="23">
    <source>
        <dbReference type="PDB" id="6F9W"/>
    </source>
</evidence>
<evidence type="ECO:0007744" key="24">
    <source>
    </source>
</evidence>
<evidence type="ECO:0007744" key="25">
    <source>
    </source>
</evidence>
<evidence type="ECO:0007744" key="26">
    <source>
    </source>
</evidence>
<evidence type="ECO:0007744" key="27">
    <source>
    </source>
</evidence>
<evidence type="ECO:0007744" key="28">
    <source>
    </source>
</evidence>
<evidence type="ECO:0007744" key="29">
    <source>
    </source>
</evidence>
<evidence type="ECO:0007744" key="30">
    <source>
    </source>
</evidence>
<evidence type="ECO:0007744" key="31">
    <source>
    </source>
</evidence>
<evidence type="ECO:0007744" key="32">
    <source>
    </source>
</evidence>
<evidence type="ECO:0007744" key="33">
    <source>
    </source>
</evidence>
<evidence type="ECO:0007744" key="34">
    <source>
    </source>
</evidence>
<evidence type="ECO:0007829" key="35">
    <source>
        <dbReference type="PDB" id="6F9W"/>
    </source>
</evidence>
<comment type="function">
    <text evidence="7 8 11 12">Essential for formation of P-bodies, cytoplasmic structures that provide storage sites for translationally inactive mRNAs and protect them from degradation (PubMed:16484376, PubMed:17074753, PubMed:29510985). Acts as a repressor of mRNA translation (PubMed:29510985). May play a role in mitotic spindle assembly (PubMed:26339800).</text>
</comment>
<comment type="subunit">
    <text evidence="1 10 12 13 14 15">Component of a ribonucleoprotein (RNP) complex (By similarity). Interacts with DDX6 (PubMed:29510985, PubMed:31422817, PubMed:31439631). Interacts with EIF4ENIF1/4E-T; promoting EIF4ENIF1/4E-T localization to P-bodies (PubMed:26027925, PubMed:29510985, PubMed:32354837). Interacts (via FFD box) with EDC4 (PubMed:29510985).</text>
</comment>
<comment type="subcellular location">
    <subcellularLocation>
        <location evidence="7 8 15">Cytoplasm</location>
        <location evidence="7 8 15">P-body</location>
    </subcellularLocation>
    <subcellularLocation>
        <location evidence="11">Cytoplasm</location>
        <location evidence="11">Cytoskeleton</location>
        <location evidence="11">Spindle</location>
    </subcellularLocation>
    <subcellularLocation>
        <location evidence="7">Cytoplasm</location>
        <location evidence="7">Stress granule</location>
    </subcellularLocation>
</comment>
<comment type="alternative products">
    <event type="alternative splicing"/>
    <isoform>
        <id>Q8ND56-1</id>
        <name>1</name>
        <name>AlphaSNBP(A)</name>
        <sequence type="displayed"/>
    </isoform>
    <isoform>
        <id>Q8ND56-2</id>
        <name>2</name>
        <name>AlphaSNBP(B)</name>
        <sequence type="described" ref="VSP_014650"/>
    </isoform>
    <isoform>
        <id>Q8ND56-3</id>
        <name>3</name>
        <sequence type="described" ref="VSP_057232"/>
    </isoform>
</comment>
<comment type="domain">
    <text evidence="7">The LSM14 domain and the RGG repeats are required for accumulation in P-bodies, and the region containing the FDF motif is responsible for cytoplasmic retention.</text>
</comment>
<comment type="similarity">
    <text evidence="21">Belongs to the LSM14 family.</text>
</comment>
<comment type="sequence caution" evidence="21">
    <conflict type="erroneous initiation">
        <sequence resource="EMBL-CDS" id="BAB55066"/>
    </conflict>
</comment>
<feature type="initiator methionine" description="Removed" evidence="29 32">
    <location>
        <position position="1"/>
    </location>
</feature>
<feature type="chain" id="PRO_0000187090" description="Protein LSM14 homolog A">
    <location>
        <begin position="2"/>
        <end position="463"/>
    </location>
</feature>
<feature type="domain" description="Sm" evidence="4">
    <location>
        <begin position="1"/>
        <end position="81"/>
    </location>
</feature>
<feature type="domain" description="DFDF" evidence="3">
    <location>
        <begin position="284"/>
        <end position="320"/>
    </location>
</feature>
<feature type="region of interest" description="Disordered" evidence="5">
    <location>
        <begin position="147"/>
        <end position="288"/>
    </location>
</feature>
<feature type="region of interest" description="Disordered" evidence="5">
    <location>
        <begin position="322"/>
        <end position="359"/>
    </location>
</feature>
<feature type="region of interest" description="Disordered" evidence="5">
    <location>
        <begin position="398"/>
        <end position="444"/>
    </location>
</feature>
<feature type="short sequence motif" description="FFD box">
    <location>
        <begin position="361"/>
        <end position="377"/>
    </location>
</feature>
<feature type="short sequence motif" description="TFG box">
    <location>
        <begin position="380"/>
        <end position="400"/>
    </location>
</feature>
<feature type="compositionally biased region" description="Polar residues" evidence="5">
    <location>
        <begin position="147"/>
        <end position="185"/>
    </location>
</feature>
<feature type="compositionally biased region" description="Polar residues" evidence="5">
    <location>
        <begin position="194"/>
        <end position="203"/>
    </location>
</feature>
<feature type="compositionally biased region" description="Basic and acidic residues" evidence="5">
    <location>
        <begin position="232"/>
        <end position="258"/>
    </location>
</feature>
<feature type="compositionally biased region" description="Basic residues" evidence="5">
    <location>
        <begin position="269"/>
        <end position="283"/>
    </location>
</feature>
<feature type="compositionally biased region" description="Basic and acidic residues" evidence="5">
    <location>
        <begin position="322"/>
        <end position="340"/>
    </location>
</feature>
<feature type="compositionally biased region" description="Gly residues" evidence="5">
    <location>
        <begin position="410"/>
        <end position="429"/>
    </location>
</feature>
<feature type="modified residue" description="N-acetylserine" evidence="29 32">
    <location>
        <position position="2"/>
    </location>
</feature>
<feature type="modified residue" description="Phosphoserine" evidence="33">
    <location>
        <position position="178"/>
    </location>
</feature>
<feature type="modified residue" description="Phosphoserine" evidence="25">
    <location>
        <position position="182"/>
    </location>
</feature>
<feature type="modified residue" description="Phosphoserine" evidence="25 30 33">
    <location>
        <position position="183"/>
    </location>
</feature>
<feature type="modified residue" description="Phosphoserine" evidence="25 30 31 33">
    <location>
        <position position="192"/>
    </location>
</feature>
<feature type="modified residue" description="Phosphothreonine" evidence="25">
    <location>
        <position position="194"/>
    </location>
</feature>
<feature type="modified residue" description="Phosphoserine" evidence="24 25 26 27 28 30 31 33 34">
    <location>
        <position position="216"/>
    </location>
</feature>
<feature type="modified residue" description="Phosphoserine" evidence="33">
    <location>
        <position position="227"/>
    </location>
</feature>
<feature type="modified residue" description="Asymmetric dimethylarginine" evidence="2">
    <location>
        <position position="401"/>
    </location>
</feature>
<feature type="splice variant" id="VSP_057232" description="In isoform 3." evidence="16">
    <location>
        <begin position="139"/>
        <end position="179"/>
    </location>
</feature>
<feature type="splice variant" id="VSP_014650" description="In isoform 2." evidence="16 17 20">
    <original>TTAFGP</original>
    <variation>DNKVAA</variation>
    <location>
        <begin position="458"/>
        <end position="463"/>
    </location>
</feature>
<feature type="sequence variant" id="VAR_057532" description="In dbSNP:rs36006556." evidence="6 9">
    <original>R</original>
    <variation>Q</variation>
    <location>
        <position position="238"/>
    </location>
</feature>
<feature type="sequence variant" id="VAR_022884" description="In dbSNP:rs2274896.">
    <original>R</original>
    <variation>Q</variation>
    <location>
        <position position="448"/>
    </location>
</feature>
<feature type="mutagenesis site" description="Abolished interaction with EIF4ENIF1/4E-T without affecting interaction with DDX6; when associated with E-29." evidence="12">
    <original>Y</original>
    <variation>E</variation>
    <location>
        <position position="22"/>
    </location>
</feature>
<feature type="mutagenesis site" description="Abolished interaction with EIF4ENIF1/4E-T without affecting interaction with DDX6; when associated with E-22." evidence="12">
    <original>I</original>
    <variation>E</variation>
    <location>
        <position position="29"/>
    </location>
</feature>
<feature type="mutagenesis site" description="Abolished interaction with DDX6." evidence="12">
    <original>FDF</original>
    <variation>ADA</variation>
    <location>
        <begin position="296"/>
        <end position="298"/>
    </location>
</feature>
<feature type="mutagenesis site" description="Abolished interaction with DDX6." evidence="12">
    <original>F</original>
    <variation>A</variation>
    <location>
        <position position="305"/>
    </location>
</feature>
<feature type="mutagenesis site" description="Does not affect interaction with DDX6." evidence="12">
    <original>FFD</original>
    <variation>AAA</variation>
    <location>
        <begin position="369"/>
        <end position="371"/>
    </location>
</feature>
<feature type="mutagenesis site" description="Abolished interaction with DDX6." evidence="12">
    <original>ETFG</original>
    <variation>AAAA</variation>
    <location>
        <begin position="394"/>
        <end position="397"/>
    </location>
</feature>
<feature type="mutagenesis site" description="Abolished interaction with DDX6." evidence="12">
    <original>F</original>
    <variation>A</variation>
    <location>
        <position position="396"/>
    </location>
</feature>
<feature type="sequence conflict" description="In Ref. 3; CAD39060." evidence="21" ref="3">
    <original>K</original>
    <variation>Q</variation>
    <location>
        <position position="17"/>
    </location>
</feature>
<feature type="strand" evidence="35">
    <location>
        <begin position="11"/>
        <end position="16"/>
    </location>
</feature>
<feature type="strand" evidence="35">
    <location>
        <begin position="21"/>
        <end position="30"/>
    </location>
</feature>
<feature type="turn" evidence="35">
    <location>
        <begin position="31"/>
        <end position="34"/>
    </location>
</feature>
<feature type="strand" evidence="35">
    <location>
        <begin position="35"/>
        <end position="46"/>
    </location>
</feature>
<feature type="strand" evidence="35">
    <location>
        <begin position="61"/>
        <end position="68"/>
    </location>
</feature>
<feature type="helix" evidence="35">
    <location>
        <begin position="69"/>
        <end position="71"/>
    </location>
</feature>
<feature type="strand" evidence="35">
    <location>
        <begin position="72"/>
        <end position="77"/>
    </location>
</feature>
<organism>
    <name type="scientific">Homo sapiens</name>
    <name type="common">Human</name>
    <dbReference type="NCBI Taxonomy" id="9606"/>
    <lineage>
        <taxon>Eukaryota</taxon>
        <taxon>Metazoa</taxon>
        <taxon>Chordata</taxon>
        <taxon>Craniata</taxon>
        <taxon>Vertebrata</taxon>
        <taxon>Euteleostomi</taxon>
        <taxon>Mammalia</taxon>
        <taxon>Eutheria</taxon>
        <taxon>Euarchontoglires</taxon>
        <taxon>Primates</taxon>
        <taxon>Haplorrhini</taxon>
        <taxon>Catarrhini</taxon>
        <taxon>Hominidae</taxon>
        <taxon>Homo</taxon>
    </lineage>
</organism>
<proteinExistence type="evidence at protein level"/>
<sequence>MSGGTPYIGSKISLISKAEIRYEGILYTIDTENSTVALAKVRSFGTEDRPTDRPIPPRDEVFEYIIFRGSDIKDLTVCEPPKPQCSLPQDPAIVQSSLGSSTSSFQSMGSYGPFGRMPTYSQFSPSSLVGQQFGAVGVAGSSLTSFGTETSNSGTLPQSSAVGSAFTQDTRSLKTQLSQGRSSPQLDPLRKSPTMEQAVQTASAHLPAPAAVGRRSPVSTRPLPSASQKAGENQEHRRAEVHKVSRPENEQLRNDNKRQVAPGAPSAPRRGRGGHRGGRGRFGIRRDGPMKFEKDFDFESANAQFNKEEIDREFHNKLKLKEDKLEKQEKPVNGEDKGDSGVDTQNSEGNADEEDPLGPNCYYDKTKSFFDNISCDDNRERRPTWAEERRLNAETFGIPLRPNRGRGGYRGRGGLGFRGGRGRGGGRGGTFTAPRGFRGGFRGGRGGREFADFEYRKTTAFGP</sequence>
<reference key="1">
    <citation type="submission" date="2001-08" db="EMBL/GenBank/DDBJ databases">
        <title>Possible alpha synuclein binding protein.</title>
        <authorList>
            <person name="Takeda K."/>
            <person name="Araki W."/>
            <person name="Tabira T."/>
        </authorList>
    </citation>
    <scope>NUCLEOTIDE SEQUENCE [MRNA] (ISOFORMS 1 AND 2)</scope>
</reference>
<reference key="2">
    <citation type="journal article" date="2004" name="Nat. Genet.">
        <title>Complete sequencing and characterization of 21,243 full-length human cDNAs.</title>
        <authorList>
            <person name="Ota T."/>
            <person name="Suzuki Y."/>
            <person name="Nishikawa T."/>
            <person name="Otsuki T."/>
            <person name="Sugiyama T."/>
            <person name="Irie R."/>
            <person name="Wakamatsu A."/>
            <person name="Hayashi K."/>
            <person name="Sato H."/>
            <person name="Nagai K."/>
            <person name="Kimura K."/>
            <person name="Makita H."/>
            <person name="Sekine M."/>
            <person name="Obayashi M."/>
            <person name="Nishi T."/>
            <person name="Shibahara T."/>
            <person name="Tanaka T."/>
            <person name="Ishii S."/>
            <person name="Yamamoto J."/>
            <person name="Saito K."/>
            <person name="Kawai Y."/>
            <person name="Isono Y."/>
            <person name="Nakamura Y."/>
            <person name="Nagahari K."/>
            <person name="Murakami K."/>
            <person name="Yasuda T."/>
            <person name="Iwayanagi T."/>
            <person name="Wagatsuma M."/>
            <person name="Shiratori A."/>
            <person name="Sudo H."/>
            <person name="Hosoiri T."/>
            <person name="Kaku Y."/>
            <person name="Kodaira H."/>
            <person name="Kondo H."/>
            <person name="Sugawara M."/>
            <person name="Takahashi M."/>
            <person name="Kanda K."/>
            <person name="Yokoi T."/>
            <person name="Furuya T."/>
            <person name="Kikkawa E."/>
            <person name="Omura Y."/>
            <person name="Abe K."/>
            <person name="Kamihara K."/>
            <person name="Katsuta N."/>
            <person name="Sato K."/>
            <person name="Tanikawa M."/>
            <person name="Yamazaki M."/>
            <person name="Ninomiya K."/>
            <person name="Ishibashi T."/>
            <person name="Yamashita H."/>
            <person name="Murakawa K."/>
            <person name="Fujimori K."/>
            <person name="Tanai H."/>
            <person name="Kimata M."/>
            <person name="Watanabe M."/>
            <person name="Hiraoka S."/>
            <person name="Chiba Y."/>
            <person name="Ishida S."/>
            <person name="Ono Y."/>
            <person name="Takiguchi S."/>
            <person name="Watanabe S."/>
            <person name="Yosida M."/>
            <person name="Hotuta T."/>
            <person name="Kusano J."/>
            <person name="Kanehori K."/>
            <person name="Takahashi-Fujii A."/>
            <person name="Hara H."/>
            <person name="Tanase T.-O."/>
            <person name="Nomura Y."/>
            <person name="Togiya S."/>
            <person name="Komai F."/>
            <person name="Hara R."/>
            <person name="Takeuchi K."/>
            <person name="Arita M."/>
            <person name="Imose N."/>
            <person name="Musashino K."/>
            <person name="Yuuki H."/>
            <person name="Oshima A."/>
            <person name="Sasaki N."/>
            <person name="Aotsuka S."/>
            <person name="Yoshikawa Y."/>
            <person name="Matsunawa H."/>
            <person name="Ichihara T."/>
            <person name="Shiohata N."/>
            <person name="Sano S."/>
            <person name="Moriya S."/>
            <person name="Momiyama H."/>
            <person name="Satoh N."/>
            <person name="Takami S."/>
            <person name="Terashima Y."/>
            <person name="Suzuki O."/>
            <person name="Nakagawa S."/>
            <person name="Senoh A."/>
            <person name="Mizoguchi H."/>
            <person name="Goto Y."/>
            <person name="Shimizu F."/>
            <person name="Wakebe H."/>
            <person name="Hishigaki H."/>
            <person name="Watanabe T."/>
            <person name="Sugiyama A."/>
            <person name="Takemoto M."/>
            <person name="Kawakami B."/>
            <person name="Yamazaki M."/>
            <person name="Watanabe K."/>
            <person name="Kumagai A."/>
            <person name="Itakura S."/>
            <person name="Fukuzumi Y."/>
            <person name="Fujimori Y."/>
            <person name="Komiyama M."/>
            <person name="Tashiro H."/>
            <person name="Tanigami A."/>
            <person name="Fujiwara T."/>
            <person name="Ono T."/>
            <person name="Yamada K."/>
            <person name="Fujii Y."/>
            <person name="Ozaki K."/>
            <person name="Hirao M."/>
            <person name="Ohmori Y."/>
            <person name="Kawabata A."/>
            <person name="Hikiji T."/>
            <person name="Kobatake N."/>
            <person name="Inagaki H."/>
            <person name="Ikema Y."/>
            <person name="Okamoto S."/>
            <person name="Okitani R."/>
            <person name="Kawakami T."/>
            <person name="Noguchi S."/>
            <person name="Itoh T."/>
            <person name="Shigeta K."/>
            <person name="Senba T."/>
            <person name="Matsumura K."/>
            <person name="Nakajima Y."/>
            <person name="Mizuno T."/>
            <person name="Morinaga M."/>
            <person name="Sasaki M."/>
            <person name="Togashi T."/>
            <person name="Oyama M."/>
            <person name="Hata H."/>
            <person name="Watanabe M."/>
            <person name="Komatsu T."/>
            <person name="Mizushima-Sugano J."/>
            <person name="Satoh T."/>
            <person name="Shirai Y."/>
            <person name="Takahashi Y."/>
            <person name="Nakagawa K."/>
            <person name="Okumura K."/>
            <person name="Nagase T."/>
            <person name="Nomura N."/>
            <person name="Kikuchi H."/>
            <person name="Masuho Y."/>
            <person name="Yamashita R."/>
            <person name="Nakai K."/>
            <person name="Yada T."/>
            <person name="Nakamura Y."/>
            <person name="Ohara O."/>
            <person name="Isogai T."/>
            <person name="Sugano S."/>
        </authorList>
    </citation>
    <scope>NUCLEOTIDE SEQUENCE [LARGE SCALE MRNA] (ISOFORMS 2 AND 3)</scope>
    <scope>VARIANT GLN-238</scope>
    <source>
        <tissue>Mammary gland</tissue>
        <tissue>Placenta</tissue>
    </source>
</reference>
<reference key="3">
    <citation type="journal article" date="2007" name="BMC Genomics">
        <title>The full-ORF clone resource of the German cDNA consortium.</title>
        <authorList>
            <person name="Bechtel S."/>
            <person name="Rosenfelder H."/>
            <person name="Duda A."/>
            <person name="Schmidt C.P."/>
            <person name="Ernst U."/>
            <person name="Wellenreuther R."/>
            <person name="Mehrle A."/>
            <person name="Schuster C."/>
            <person name="Bahr A."/>
            <person name="Bloecker H."/>
            <person name="Heubner D."/>
            <person name="Hoerlein A."/>
            <person name="Michel G."/>
            <person name="Wedler H."/>
            <person name="Koehrer K."/>
            <person name="Ottenwaelder B."/>
            <person name="Poustka A."/>
            <person name="Wiemann S."/>
            <person name="Schupp I."/>
        </authorList>
    </citation>
    <scope>NUCLEOTIDE SEQUENCE [LARGE SCALE MRNA] (ISOFORM 1)</scope>
    <scope>VARIANT GLN-238</scope>
    <source>
        <tissue>Brain</tissue>
        <tissue>Testis</tissue>
    </source>
</reference>
<reference key="4">
    <citation type="journal article" date="2004" name="Nature">
        <title>The DNA sequence and biology of human chromosome 19.</title>
        <authorList>
            <person name="Grimwood J."/>
            <person name="Gordon L.A."/>
            <person name="Olsen A.S."/>
            <person name="Terry A."/>
            <person name="Schmutz J."/>
            <person name="Lamerdin J.E."/>
            <person name="Hellsten U."/>
            <person name="Goodstein D."/>
            <person name="Couronne O."/>
            <person name="Tran-Gyamfi M."/>
            <person name="Aerts A."/>
            <person name="Altherr M."/>
            <person name="Ashworth L."/>
            <person name="Bajorek E."/>
            <person name="Black S."/>
            <person name="Branscomb E."/>
            <person name="Caenepeel S."/>
            <person name="Carrano A.V."/>
            <person name="Caoile C."/>
            <person name="Chan Y.M."/>
            <person name="Christensen M."/>
            <person name="Cleland C.A."/>
            <person name="Copeland A."/>
            <person name="Dalin E."/>
            <person name="Dehal P."/>
            <person name="Denys M."/>
            <person name="Detter J.C."/>
            <person name="Escobar J."/>
            <person name="Flowers D."/>
            <person name="Fotopulos D."/>
            <person name="Garcia C."/>
            <person name="Georgescu A.M."/>
            <person name="Glavina T."/>
            <person name="Gomez M."/>
            <person name="Gonzales E."/>
            <person name="Groza M."/>
            <person name="Hammon N."/>
            <person name="Hawkins T."/>
            <person name="Haydu L."/>
            <person name="Ho I."/>
            <person name="Huang W."/>
            <person name="Israni S."/>
            <person name="Jett J."/>
            <person name="Kadner K."/>
            <person name="Kimball H."/>
            <person name="Kobayashi A."/>
            <person name="Larionov V."/>
            <person name="Leem S.-H."/>
            <person name="Lopez F."/>
            <person name="Lou Y."/>
            <person name="Lowry S."/>
            <person name="Malfatti S."/>
            <person name="Martinez D."/>
            <person name="McCready P.M."/>
            <person name="Medina C."/>
            <person name="Morgan J."/>
            <person name="Nelson K."/>
            <person name="Nolan M."/>
            <person name="Ovcharenko I."/>
            <person name="Pitluck S."/>
            <person name="Pollard M."/>
            <person name="Popkie A.P."/>
            <person name="Predki P."/>
            <person name="Quan G."/>
            <person name="Ramirez L."/>
            <person name="Rash S."/>
            <person name="Retterer J."/>
            <person name="Rodriguez A."/>
            <person name="Rogers S."/>
            <person name="Salamov A."/>
            <person name="Salazar A."/>
            <person name="She X."/>
            <person name="Smith D."/>
            <person name="Slezak T."/>
            <person name="Solovyev V."/>
            <person name="Thayer N."/>
            <person name="Tice H."/>
            <person name="Tsai M."/>
            <person name="Ustaszewska A."/>
            <person name="Vo N."/>
            <person name="Wagner M."/>
            <person name="Wheeler J."/>
            <person name="Wu K."/>
            <person name="Xie G."/>
            <person name="Yang J."/>
            <person name="Dubchak I."/>
            <person name="Furey T.S."/>
            <person name="DeJong P."/>
            <person name="Dickson M."/>
            <person name="Gordon D."/>
            <person name="Eichler E.E."/>
            <person name="Pennacchio L.A."/>
            <person name="Richardson P."/>
            <person name="Stubbs L."/>
            <person name="Rokhsar D.S."/>
            <person name="Myers R.M."/>
            <person name="Rubin E.M."/>
            <person name="Lucas S.M."/>
        </authorList>
    </citation>
    <scope>NUCLEOTIDE SEQUENCE [LARGE SCALE GENOMIC DNA]</scope>
</reference>
<reference key="5">
    <citation type="journal article" date="2004" name="Genome Res.">
        <title>The status, quality, and expansion of the NIH full-length cDNA project: the Mammalian Gene Collection (MGC).</title>
        <authorList>
            <consortium name="The MGC Project Team"/>
        </authorList>
    </citation>
    <scope>NUCLEOTIDE SEQUENCE [LARGE SCALE MRNA] (ISOFORM 2)</scope>
    <source>
        <tissue>Pancreas</tissue>
    </source>
</reference>
<reference key="6">
    <citation type="journal article" date="2006" name="Cell">
        <title>Global, in vivo, and site-specific phosphorylation dynamics in signaling networks.</title>
        <authorList>
            <person name="Olsen J.V."/>
            <person name="Blagoev B."/>
            <person name="Gnad F."/>
            <person name="Macek B."/>
            <person name="Kumar C."/>
            <person name="Mortensen P."/>
            <person name="Mann M."/>
        </authorList>
    </citation>
    <scope>PHOSPHORYLATION [LARGE SCALE ANALYSIS] AT SER-216</scope>
    <scope>IDENTIFICATION BY MASS SPECTROMETRY [LARGE SCALE ANALYSIS]</scope>
    <source>
        <tissue>Cervix carcinoma</tissue>
    </source>
</reference>
<reference key="7">
    <citation type="journal article" date="2006" name="J. Biol. Chem.">
        <title>RAP55, a cytoplasmic mRNP component, represses translation in Xenopus oocytes.</title>
        <authorList>
            <person name="Tanaka K.J."/>
            <person name="Ogawa K."/>
            <person name="Takagi M."/>
            <person name="Imamoto N."/>
            <person name="Matsumoto K."/>
            <person name="Tsujimoto M."/>
        </authorList>
    </citation>
    <scope>FUNCTION</scope>
    <scope>SUBCELLULAR LOCATION</scope>
</reference>
<reference key="8">
    <citation type="journal article" date="2006" name="RNA">
        <title>RNA-associated protein 55 (RAP55) localizes to mRNA processing bodies and stress granules.</title>
        <authorList>
            <person name="Yang W.H."/>
            <person name="Yu J.H."/>
            <person name="Gulick T."/>
            <person name="Bloch K.D."/>
            <person name="Bloch D.B."/>
        </authorList>
    </citation>
    <scope>FUNCTION</scope>
    <scope>SUBCELLULAR LOCATION</scope>
    <scope>DOMAIN</scope>
</reference>
<reference key="9">
    <citation type="journal article" date="2007" name="Science">
        <title>ATM and ATR substrate analysis reveals extensive protein networks responsive to DNA damage.</title>
        <authorList>
            <person name="Matsuoka S."/>
            <person name="Ballif B.A."/>
            <person name="Smogorzewska A."/>
            <person name="McDonald E.R. III"/>
            <person name="Hurov K.E."/>
            <person name="Luo J."/>
            <person name="Bakalarski C.E."/>
            <person name="Zhao Z."/>
            <person name="Solimini N."/>
            <person name="Lerenthal Y."/>
            <person name="Shiloh Y."/>
            <person name="Gygi S.P."/>
            <person name="Elledge S.J."/>
        </authorList>
    </citation>
    <scope>IDENTIFICATION BY MASS SPECTROMETRY [LARGE SCALE ANALYSIS]</scope>
    <source>
        <tissue>Embryonic kidney</tissue>
    </source>
</reference>
<reference key="10">
    <citation type="journal article" date="2008" name="J. Proteome Res.">
        <title>Phosphorylation analysis of primary human T lymphocytes using sequential IMAC and titanium oxide enrichment.</title>
        <authorList>
            <person name="Carrascal M."/>
            <person name="Ovelleiro D."/>
            <person name="Casas V."/>
            <person name="Gay M."/>
            <person name="Abian J."/>
        </authorList>
    </citation>
    <scope>PHOSPHORYLATION [LARGE SCALE ANALYSIS] AT SER-216</scope>
    <scope>IDENTIFICATION BY MASS SPECTROMETRY [LARGE SCALE ANALYSIS]</scope>
    <source>
        <tissue>T-cell</tissue>
    </source>
</reference>
<reference key="11">
    <citation type="journal article" date="2008" name="J. Proteome Res.">
        <title>Phosphoproteome of resting human platelets.</title>
        <authorList>
            <person name="Zahedi R.P."/>
            <person name="Lewandrowski U."/>
            <person name="Wiesner J."/>
            <person name="Wortelkamp S."/>
            <person name="Moebius J."/>
            <person name="Schuetz C."/>
            <person name="Walter U."/>
            <person name="Gambaryan S."/>
            <person name="Sickmann A."/>
        </authorList>
    </citation>
    <scope>IDENTIFICATION BY MASS SPECTROMETRY [LARGE SCALE ANALYSIS]</scope>
    <source>
        <tissue>Platelet</tissue>
    </source>
</reference>
<reference key="12">
    <citation type="journal article" date="2008" name="Mol. Cell">
        <title>Kinase-selective enrichment enables quantitative phosphoproteomics of the kinome across the cell cycle.</title>
        <authorList>
            <person name="Daub H."/>
            <person name="Olsen J.V."/>
            <person name="Bairlein M."/>
            <person name="Gnad F."/>
            <person name="Oppermann F.S."/>
            <person name="Korner R."/>
            <person name="Greff Z."/>
            <person name="Keri G."/>
            <person name="Stemmann O."/>
            <person name="Mann M."/>
        </authorList>
    </citation>
    <scope>PHOSPHORYLATION [LARGE SCALE ANALYSIS] AT SER-216</scope>
    <scope>IDENTIFICATION BY MASS SPECTROMETRY [LARGE SCALE ANALYSIS]</scope>
    <source>
        <tissue>Cervix carcinoma</tissue>
    </source>
</reference>
<reference key="13">
    <citation type="journal article" date="2008" name="Proc. Natl. Acad. Sci. U.S.A.">
        <title>A quantitative atlas of mitotic phosphorylation.</title>
        <authorList>
            <person name="Dephoure N."/>
            <person name="Zhou C."/>
            <person name="Villen J."/>
            <person name="Beausoleil S.A."/>
            <person name="Bakalarski C.E."/>
            <person name="Elledge S.J."/>
            <person name="Gygi S.P."/>
        </authorList>
    </citation>
    <scope>PHOSPHORYLATION [LARGE SCALE ANALYSIS] AT SER-182; SER-183; SER-192; THR-194 AND SER-216</scope>
    <scope>IDENTIFICATION BY MASS SPECTROMETRY [LARGE SCALE ANALYSIS]</scope>
    <source>
        <tissue>Cervix carcinoma</tissue>
    </source>
</reference>
<reference key="14">
    <citation type="journal article" date="2009" name="Anal. Chem.">
        <title>Lys-N and trypsin cover complementary parts of the phosphoproteome in a refined SCX-based approach.</title>
        <authorList>
            <person name="Gauci S."/>
            <person name="Helbig A.O."/>
            <person name="Slijper M."/>
            <person name="Krijgsveld J."/>
            <person name="Heck A.J."/>
            <person name="Mohammed S."/>
        </authorList>
    </citation>
    <scope>ACETYLATION [LARGE SCALE ANALYSIS] AT SER-2</scope>
    <scope>CLEAVAGE OF INITIATOR METHIONINE [LARGE SCALE ANALYSIS]</scope>
    <scope>IDENTIFICATION BY MASS SPECTROMETRY [LARGE SCALE ANALYSIS]</scope>
</reference>
<reference key="15">
    <citation type="journal article" date="2009" name="Int. J. Biochem. Cell Biol.">
        <title>RAP55: insights into an evolutionarily conserved protein family.</title>
        <authorList>
            <person name="Marnef A."/>
            <person name="Sommerville J."/>
            <person name="Ladomery M.R."/>
        </authorList>
    </citation>
    <scope>REVIEW</scope>
</reference>
<reference key="16">
    <citation type="journal article" date="2009" name="Mol. Cell. Proteomics">
        <title>Large-scale proteomics analysis of the human kinome.</title>
        <authorList>
            <person name="Oppermann F.S."/>
            <person name="Gnad F."/>
            <person name="Olsen J.V."/>
            <person name="Hornberger R."/>
            <person name="Greff Z."/>
            <person name="Keri G."/>
            <person name="Mann M."/>
            <person name="Daub H."/>
        </authorList>
    </citation>
    <scope>PHOSPHORYLATION [LARGE SCALE ANALYSIS] AT SER-216</scope>
    <scope>IDENTIFICATION BY MASS SPECTROMETRY [LARGE SCALE ANALYSIS]</scope>
</reference>
<reference key="17">
    <citation type="journal article" date="2009" name="Sci. Signal.">
        <title>Quantitative phosphoproteomic analysis of T cell receptor signaling reveals system-wide modulation of protein-protein interactions.</title>
        <authorList>
            <person name="Mayya V."/>
            <person name="Lundgren D.H."/>
            <person name="Hwang S.-I."/>
            <person name="Rezaul K."/>
            <person name="Wu L."/>
            <person name="Eng J.K."/>
            <person name="Rodionov V."/>
            <person name="Han D.K."/>
        </authorList>
    </citation>
    <scope>IDENTIFICATION BY MASS SPECTROMETRY [LARGE SCALE ANALYSIS]</scope>
    <source>
        <tissue>Leukemic T-cell</tissue>
    </source>
</reference>
<reference key="18">
    <citation type="journal article" date="2010" name="Sci. Signal.">
        <title>Quantitative phosphoproteomics reveals widespread full phosphorylation site occupancy during mitosis.</title>
        <authorList>
            <person name="Olsen J.V."/>
            <person name="Vermeulen M."/>
            <person name="Santamaria A."/>
            <person name="Kumar C."/>
            <person name="Miller M.L."/>
            <person name="Jensen L.J."/>
            <person name="Gnad F."/>
            <person name="Cox J."/>
            <person name="Jensen T.S."/>
            <person name="Nigg E.A."/>
            <person name="Brunak S."/>
            <person name="Mann M."/>
        </authorList>
    </citation>
    <scope>PHOSPHORYLATION [LARGE SCALE ANALYSIS] AT SER-183; SER-192 AND SER-216</scope>
    <scope>IDENTIFICATION BY MASS SPECTROMETRY [LARGE SCALE ANALYSIS]</scope>
    <source>
        <tissue>Cervix carcinoma</tissue>
    </source>
</reference>
<reference key="19">
    <citation type="journal article" date="2011" name="BMC Syst. Biol.">
        <title>Initial characterization of the human central proteome.</title>
        <authorList>
            <person name="Burkard T.R."/>
            <person name="Planyavsky M."/>
            <person name="Kaupe I."/>
            <person name="Breitwieser F.P."/>
            <person name="Buerckstuemmer T."/>
            <person name="Bennett K.L."/>
            <person name="Superti-Furga G."/>
            <person name="Colinge J."/>
        </authorList>
    </citation>
    <scope>IDENTIFICATION BY MASS SPECTROMETRY [LARGE SCALE ANALYSIS]</scope>
</reference>
<reference key="20">
    <citation type="journal article" date="2011" name="Sci. Signal.">
        <title>System-wide temporal characterization of the proteome and phosphoproteome of human embryonic stem cell differentiation.</title>
        <authorList>
            <person name="Rigbolt K.T."/>
            <person name="Prokhorova T.A."/>
            <person name="Akimov V."/>
            <person name="Henningsen J."/>
            <person name="Johansen P.T."/>
            <person name="Kratchmarova I."/>
            <person name="Kassem M."/>
            <person name="Mann M."/>
            <person name="Olsen J.V."/>
            <person name="Blagoev B."/>
        </authorList>
    </citation>
    <scope>PHOSPHORYLATION [LARGE SCALE ANALYSIS] AT SER-192 AND SER-216</scope>
    <scope>IDENTIFICATION BY MASS SPECTROMETRY [LARGE SCALE ANALYSIS]</scope>
</reference>
<reference key="21">
    <citation type="journal article" date="2012" name="Mol. Cell. Proteomics">
        <title>Comparative large-scale characterisation of plant vs. mammal proteins reveals similar and idiosyncratic N-alpha acetylation features.</title>
        <authorList>
            <person name="Bienvenut W.V."/>
            <person name="Sumpton D."/>
            <person name="Martinez A."/>
            <person name="Lilla S."/>
            <person name="Espagne C."/>
            <person name="Meinnel T."/>
            <person name="Giglione C."/>
        </authorList>
    </citation>
    <scope>ACETYLATION [LARGE SCALE ANALYSIS] AT SER-2</scope>
    <scope>CLEAVAGE OF INITIATOR METHIONINE [LARGE SCALE ANALYSIS]</scope>
    <scope>IDENTIFICATION BY MASS SPECTROMETRY [LARGE SCALE ANALYSIS]</scope>
</reference>
<reference key="22">
    <citation type="journal article" date="2013" name="J. Proteome Res.">
        <title>Toward a comprehensive characterization of a human cancer cell phosphoproteome.</title>
        <authorList>
            <person name="Zhou H."/>
            <person name="Di Palma S."/>
            <person name="Preisinger C."/>
            <person name="Peng M."/>
            <person name="Polat A.N."/>
            <person name="Heck A.J."/>
            <person name="Mohammed S."/>
        </authorList>
    </citation>
    <scope>PHOSPHORYLATION [LARGE SCALE ANALYSIS] AT SER-178; SER-183; SER-192; SER-216 AND SER-227</scope>
    <scope>IDENTIFICATION BY MASS SPECTROMETRY [LARGE SCALE ANALYSIS]</scope>
    <source>
        <tissue>Cervix carcinoma</tissue>
        <tissue>Erythroleukemia</tissue>
    </source>
</reference>
<reference key="23">
    <citation type="journal article" date="2014" name="J. Proteomics">
        <title>An enzyme assisted RP-RPLC approach for in-depth analysis of human liver phosphoproteome.</title>
        <authorList>
            <person name="Bian Y."/>
            <person name="Song C."/>
            <person name="Cheng K."/>
            <person name="Dong M."/>
            <person name="Wang F."/>
            <person name="Huang J."/>
            <person name="Sun D."/>
            <person name="Wang L."/>
            <person name="Ye M."/>
            <person name="Zou H."/>
        </authorList>
    </citation>
    <scope>PHOSPHORYLATION [LARGE SCALE ANALYSIS] AT SER-216</scope>
    <scope>IDENTIFICATION BY MASS SPECTROMETRY [LARGE SCALE ANALYSIS]</scope>
    <source>
        <tissue>Liver</tissue>
    </source>
</reference>
<reference key="24">
    <citation type="journal article" date="2015" name="Acta Biochim. Pol.">
        <title>Localization and role of RAP55/LSM14 in HeLa cells: a new finding on the mitotic spindle assembly.</title>
        <authorList>
            <person name="Mili D."/>
            <person name="Georgesse D."/>
            <person name="Kenani A."/>
        </authorList>
    </citation>
    <scope>FUNCTION</scope>
    <scope>SUBCELLULAR LOCATION</scope>
</reference>
<reference key="25">
    <citation type="journal article" date="2015" name="Cell Rep.">
        <title>The eIF4E-Binding protein 4E-T is a component of the mRNA decay machinery that bridges the 5' and 3' termini of target mRNAs.</title>
        <authorList>
            <person name="Nishimura T."/>
            <person name="Padamsi Z."/>
            <person name="Fakim H."/>
            <person name="Milette S."/>
            <person name="Dunham W.H."/>
            <person name="Gingras A.C."/>
            <person name="Fabian M.R."/>
        </authorList>
    </citation>
    <scope>INTERACTION WITH EIF4ENIF1</scope>
</reference>
<reference key="26">
    <citation type="journal article" date="2019" name="Am. J. Hum. Genet.">
        <title>Rare de novo missense variants in RNA helicase DDX6 cause intellectual disability and dysmorphic features and lead to P-body defects and RNA dysregulation.</title>
        <authorList>
            <person name="Balak C."/>
            <person name="Benard M."/>
            <person name="Schaefer E."/>
            <person name="Iqbal S."/>
            <person name="Ramsey K."/>
            <person name="Ernoult-Lange M."/>
            <person name="Mattioli F."/>
            <person name="Llaci L."/>
            <person name="Geoffroy V."/>
            <person name="Courel M."/>
            <person name="Naymik M."/>
            <person name="Bachman K.K."/>
            <person name="Pfundt R."/>
            <person name="Rump P."/>
            <person name="Ter Beest J."/>
            <person name="Wentzensen I.M."/>
            <person name="Monaghan K.G."/>
            <person name="McWalter K."/>
            <person name="Richholt R."/>
            <person name="Le Bechec A."/>
            <person name="Jepsen W."/>
            <person name="De Both M."/>
            <person name="Belnap N."/>
            <person name="Boland A."/>
            <person name="Piras I.S."/>
            <person name="Deleuze J.F."/>
            <person name="Szelinger S."/>
            <person name="Dollfus H."/>
            <person name="Chelly J."/>
            <person name="Muller J."/>
            <person name="Campbell A."/>
            <person name="Lal D."/>
            <person name="Rangasamy S."/>
            <person name="Mandel J.L."/>
            <person name="Narayanan V."/>
            <person name="Huentelman M."/>
            <person name="Weil D."/>
            <person name="Piton A."/>
        </authorList>
    </citation>
    <scope>INTERACTION WITH DDX6</scope>
</reference>
<reference key="27">
    <citation type="journal article" date="2020" name="Genes Dev.">
        <title>4E-T-bound mRNAs are stored in a silenced and deadenylated form.</title>
        <authorList>
            <person name="Raesch F."/>
            <person name="Weber R."/>
            <person name="Izaurralde E."/>
            <person name="Igreja C."/>
        </authorList>
    </citation>
    <scope>SUBCELLULAR LOCATION</scope>
    <scope>INTERACTION WITH EIF4ENIF1</scope>
</reference>
<reference key="28">
    <citation type="journal article" date="2019" name="Genes Dev.">
        <title>Molecular basis for GIGYF-Me31B complex assembly in 4EHP-mediated translational repression.</title>
        <authorList>
            <person name="Peter D."/>
            <person name="Ruscica V."/>
            <person name="Bawankar P."/>
            <person name="Weber R."/>
            <person name="Helms S."/>
            <person name="Valkov E."/>
            <person name="Igreja C."/>
            <person name="Izaurralde E."/>
        </authorList>
    </citation>
    <scope>INTERACTION WITH DDX6</scope>
</reference>
<reference evidence="23" key="29">
    <citation type="journal article" date="2018" name="EMBO J.">
        <title>Molecular architecture of LSM14 interactions involved in the assembly of mRNA silencing complexes.</title>
        <authorList>
            <person name="Brandmann T."/>
            <person name="Fakim H."/>
            <person name="Padamsi Z."/>
            <person name="Youn J.Y."/>
            <person name="Gingras A.C."/>
            <person name="Fabian M.R."/>
            <person name="Jinek M."/>
        </authorList>
    </citation>
    <scope>X-RAY CRYSTALLOGRAPHY (2.62 ANGSTROMS) OF 1-84 IN COMPLEX WITH EIF4ENIF1</scope>
    <scope>FUNCTION</scope>
    <scope>INTERACTION WITH EIF4ENIF1; EDC4 AND DDX6</scope>
    <scope>MUTAGENESIS OF TYR-22; ILE-29; 296-PHE--PHE-298; PHE-305; 369-PHE--ASP-371; 394-GLU--GLY-397 AND PHE-396</scope>
</reference>
<gene>
    <name evidence="19 22" type="primary">LSM14A</name>
    <name type="synonym">C19orf13</name>
    <name type="synonym">FAM61A</name>
    <name evidence="18" type="synonym">RAP55</name>
    <name type="synonym">RAP55A</name>
</gene>
<dbReference type="EMBL" id="AB069974">
    <property type="protein sequence ID" value="BAC99045.1"/>
    <property type="molecule type" value="mRNA"/>
</dbReference>
<dbReference type="EMBL" id="AB069975">
    <property type="protein sequence ID" value="BAC99046.1"/>
    <property type="molecule type" value="mRNA"/>
</dbReference>
<dbReference type="EMBL" id="AK027369">
    <property type="protein sequence ID" value="BAB55066.1"/>
    <property type="status" value="ALT_INIT"/>
    <property type="molecule type" value="mRNA"/>
</dbReference>
<dbReference type="EMBL" id="AK027643">
    <property type="protein sequence ID" value="BAB55259.1"/>
    <property type="molecule type" value="mRNA"/>
</dbReference>
<dbReference type="EMBL" id="AK300208">
    <property type="protein sequence ID" value="BAG61978.1"/>
    <property type="molecule type" value="mRNA"/>
</dbReference>
<dbReference type="EMBL" id="AL834398">
    <property type="protein sequence ID" value="CAD39060.2"/>
    <property type="molecule type" value="mRNA"/>
</dbReference>
<dbReference type="EMBL" id="AL117499">
    <property type="protein sequence ID" value="CAB55964.1"/>
    <property type="molecule type" value="mRNA"/>
</dbReference>
<dbReference type="EMBL" id="AC010614">
    <property type="status" value="NOT_ANNOTATED_CDS"/>
    <property type="molecule type" value="Genomic_DNA"/>
</dbReference>
<dbReference type="EMBL" id="BC016842">
    <property type="protein sequence ID" value="AAH16842.1"/>
    <property type="molecule type" value="mRNA"/>
</dbReference>
<dbReference type="CCDS" id="CCDS12435.1">
    <molecule id="Q8ND56-2"/>
</dbReference>
<dbReference type="CCDS" id="CCDS46040.1">
    <molecule id="Q8ND56-1"/>
</dbReference>
<dbReference type="CCDS" id="CCDS92582.1">
    <molecule id="Q8ND56-3"/>
</dbReference>
<dbReference type="PIR" id="T17274">
    <property type="entry name" value="T17274"/>
</dbReference>
<dbReference type="RefSeq" id="NP_001107565.1">
    <molecule id="Q8ND56-1"/>
    <property type="nucleotide sequence ID" value="NM_001114093.3"/>
</dbReference>
<dbReference type="RefSeq" id="NP_001371352.1">
    <molecule id="Q8ND56-3"/>
    <property type="nucleotide sequence ID" value="NM_001384423.1"/>
</dbReference>
<dbReference type="RefSeq" id="NP_056393.2">
    <molecule id="Q8ND56-2"/>
    <property type="nucleotide sequence ID" value="NM_015578.4"/>
</dbReference>
<dbReference type="PDB" id="6F9W">
    <property type="method" value="X-ray"/>
    <property type="resolution" value="2.62 A"/>
    <property type="chains" value="A=1-84"/>
</dbReference>
<dbReference type="PDBsum" id="6F9W"/>
<dbReference type="SMR" id="Q8ND56"/>
<dbReference type="BioGRID" id="117527">
    <property type="interactions" value="255"/>
</dbReference>
<dbReference type="FunCoup" id="Q8ND56">
    <property type="interactions" value="3242"/>
</dbReference>
<dbReference type="IntAct" id="Q8ND56">
    <property type="interactions" value="94"/>
</dbReference>
<dbReference type="MINT" id="Q8ND56"/>
<dbReference type="STRING" id="9606.ENSP00000446271"/>
<dbReference type="GlyCosmos" id="Q8ND56">
    <property type="glycosylation" value="3 sites, 1 glycan"/>
</dbReference>
<dbReference type="GlyGen" id="Q8ND56">
    <property type="glycosylation" value="4 sites, 1 O-linked glycan (4 sites)"/>
</dbReference>
<dbReference type="iPTMnet" id="Q8ND56"/>
<dbReference type="PhosphoSitePlus" id="Q8ND56"/>
<dbReference type="BioMuta" id="LSM14A"/>
<dbReference type="jPOST" id="Q8ND56"/>
<dbReference type="MassIVE" id="Q8ND56"/>
<dbReference type="PaxDb" id="9606-ENSP00000446271"/>
<dbReference type="PeptideAtlas" id="Q8ND56"/>
<dbReference type="ProteomicsDB" id="5108"/>
<dbReference type="ProteomicsDB" id="72979">
    <molecule id="Q8ND56-1"/>
</dbReference>
<dbReference type="ProteomicsDB" id="72980">
    <molecule id="Q8ND56-2"/>
</dbReference>
<dbReference type="Pumba" id="Q8ND56"/>
<dbReference type="Antibodypedia" id="47950">
    <property type="antibodies" value="165 antibodies from 29 providers"/>
</dbReference>
<dbReference type="DNASU" id="26065"/>
<dbReference type="Ensembl" id="ENST00000433627.9">
    <molecule id="Q8ND56-1"/>
    <property type="protein sequence ID" value="ENSP00000413964.3"/>
    <property type="gene ID" value="ENSG00000257103.9"/>
</dbReference>
<dbReference type="Ensembl" id="ENST00000540746.6">
    <molecule id="Q8ND56-3"/>
    <property type="protein sequence ID" value="ENSP00000446451.1"/>
    <property type="gene ID" value="ENSG00000257103.9"/>
</dbReference>
<dbReference type="Ensembl" id="ENST00000544216.8">
    <molecule id="Q8ND56-2"/>
    <property type="protein sequence ID" value="ENSP00000446271.2"/>
    <property type="gene ID" value="ENSG00000257103.9"/>
</dbReference>
<dbReference type="Ensembl" id="ENST00000570462.5">
    <molecule id="Q8ND56-1"/>
    <property type="protein sequence ID" value="ENSP00000459843.1"/>
    <property type="gene ID" value="ENSG00000262860.5"/>
</dbReference>
<dbReference type="Ensembl" id="ENST00000575811.5">
    <molecule id="Q8ND56-2"/>
    <property type="protein sequence ID" value="ENSP00000461225.1"/>
    <property type="gene ID" value="ENSG00000262860.5"/>
</dbReference>
<dbReference type="GeneID" id="26065"/>
<dbReference type="KEGG" id="hsa:26065"/>
<dbReference type="MANE-Select" id="ENST00000544216.8">
    <molecule id="Q8ND56-2"/>
    <property type="protein sequence ID" value="ENSP00000446271.2"/>
    <property type="RefSeq nucleotide sequence ID" value="NM_015578.4"/>
    <property type="RefSeq protein sequence ID" value="NP_056393.2"/>
</dbReference>
<dbReference type="UCSC" id="uc002nva.5">
    <molecule id="Q8ND56-1"/>
    <property type="organism name" value="human"/>
</dbReference>
<dbReference type="AGR" id="HGNC:24489"/>
<dbReference type="CTD" id="26065"/>
<dbReference type="DisGeNET" id="26065"/>
<dbReference type="GeneCards" id="LSM14A"/>
<dbReference type="HGNC" id="HGNC:24489">
    <property type="gene designation" value="LSM14A"/>
</dbReference>
<dbReference type="HPA" id="ENSG00000257103">
    <property type="expression patterns" value="Low tissue specificity"/>
</dbReference>
<dbReference type="MIM" id="610677">
    <property type="type" value="gene"/>
</dbReference>
<dbReference type="neXtProt" id="NX_Q8ND56"/>
<dbReference type="OpenTargets" id="ENSG00000257103"/>
<dbReference type="PharmGKB" id="PA134989467"/>
<dbReference type="VEuPathDB" id="HostDB:ENSG00000257103"/>
<dbReference type="eggNOG" id="KOG1073">
    <property type="taxonomic scope" value="Eukaryota"/>
</dbReference>
<dbReference type="GeneTree" id="ENSGT00940000154415"/>
<dbReference type="InParanoid" id="Q8ND56"/>
<dbReference type="OMA" id="WYPPPGH"/>
<dbReference type="OrthoDB" id="21539at2759"/>
<dbReference type="PAN-GO" id="Q8ND56">
    <property type="GO annotations" value="5 GO annotations based on evolutionary models"/>
</dbReference>
<dbReference type="PhylomeDB" id="Q8ND56"/>
<dbReference type="TreeFam" id="TF313514"/>
<dbReference type="PathwayCommons" id="Q8ND56"/>
<dbReference type="SignaLink" id="Q8ND56"/>
<dbReference type="BioGRID-ORCS" id="26065">
    <property type="hits" value="95 hits in 1152 CRISPR screens"/>
</dbReference>
<dbReference type="CD-CODE" id="232F8A39">
    <property type="entry name" value="P-body"/>
</dbReference>
<dbReference type="CD-CODE" id="DEE660B4">
    <property type="entry name" value="Stress granule"/>
</dbReference>
<dbReference type="ChiTaRS" id="LSM14A">
    <property type="organism name" value="human"/>
</dbReference>
<dbReference type="GenomeRNAi" id="26065"/>
<dbReference type="Pharos" id="Q8ND56">
    <property type="development level" value="Tbio"/>
</dbReference>
<dbReference type="PRO" id="PR:Q8ND56"/>
<dbReference type="Proteomes" id="UP000005640">
    <property type="component" value="Chromosome 19"/>
</dbReference>
<dbReference type="RNAct" id="Q8ND56">
    <property type="molecule type" value="protein"/>
</dbReference>
<dbReference type="Bgee" id="ENSG00000257103">
    <property type="expression patterns" value="Expressed in ventricular zone and 107 other cell types or tissues"/>
</dbReference>
<dbReference type="ExpressionAtlas" id="Q8ND56">
    <property type="expression patterns" value="baseline and differential"/>
</dbReference>
<dbReference type="GO" id="GO:0005737">
    <property type="term" value="C:cytoplasm"/>
    <property type="evidence" value="ECO:0000314"/>
    <property type="project" value="UniProtKB"/>
</dbReference>
<dbReference type="GO" id="GO:0036464">
    <property type="term" value="C:cytoplasmic ribonucleoprotein granule"/>
    <property type="evidence" value="ECO:0000314"/>
    <property type="project" value="HPA"/>
</dbReference>
<dbReference type="GO" id="GO:0010494">
    <property type="term" value="C:cytoplasmic stress granule"/>
    <property type="evidence" value="ECO:0000314"/>
    <property type="project" value="UniProtKB"/>
</dbReference>
<dbReference type="GO" id="GO:0005829">
    <property type="term" value="C:cytosol"/>
    <property type="evidence" value="ECO:0000314"/>
    <property type="project" value="HPA"/>
</dbReference>
<dbReference type="GO" id="GO:0072686">
    <property type="term" value="C:mitotic spindle"/>
    <property type="evidence" value="ECO:0000314"/>
    <property type="project" value="UniProtKB"/>
</dbReference>
<dbReference type="GO" id="GO:0000932">
    <property type="term" value="C:P-body"/>
    <property type="evidence" value="ECO:0000314"/>
    <property type="project" value="UniProtKB"/>
</dbReference>
<dbReference type="GO" id="GO:1990904">
    <property type="term" value="C:ribonucleoprotein complex"/>
    <property type="evidence" value="ECO:0007669"/>
    <property type="project" value="UniProtKB-KW"/>
</dbReference>
<dbReference type="GO" id="GO:0003690">
    <property type="term" value="F:double-stranded DNA binding"/>
    <property type="evidence" value="ECO:0007669"/>
    <property type="project" value="Ensembl"/>
</dbReference>
<dbReference type="GO" id="GO:0003725">
    <property type="term" value="F:double-stranded RNA binding"/>
    <property type="evidence" value="ECO:0007669"/>
    <property type="project" value="Ensembl"/>
</dbReference>
<dbReference type="GO" id="GO:0003729">
    <property type="term" value="F:mRNA binding"/>
    <property type="evidence" value="ECO:0000318"/>
    <property type="project" value="GO_Central"/>
</dbReference>
<dbReference type="GO" id="GO:0003723">
    <property type="term" value="F:RNA binding"/>
    <property type="evidence" value="ECO:0007005"/>
    <property type="project" value="UniProtKB"/>
</dbReference>
<dbReference type="GO" id="GO:0003727">
    <property type="term" value="F:single-stranded RNA binding"/>
    <property type="evidence" value="ECO:0007669"/>
    <property type="project" value="Ensembl"/>
</dbReference>
<dbReference type="GO" id="GO:0051607">
    <property type="term" value="P:defense response to virus"/>
    <property type="evidence" value="ECO:0007669"/>
    <property type="project" value="Ensembl"/>
</dbReference>
<dbReference type="GO" id="GO:0090307">
    <property type="term" value="P:mitotic spindle assembly"/>
    <property type="evidence" value="ECO:0000315"/>
    <property type="project" value="UniProtKB"/>
</dbReference>
<dbReference type="GO" id="GO:0017148">
    <property type="term" value="P:negative regulation of translation"/>
    <property type="evidence" value="ECO:0000315"/>
    <property type="project" value="UniProtKB"/>
</dbReference>
<dbReference type="GO" id="GO:0033962">
    <property type="term" value="P:P-body assembly"/>
    <property type="evidence" value="ECO:0000314"/>
    <property type="project" value="UniProtKB"/>
</dbReference>
<dbReference type="GO" id="GO:0060340">
    <property type="term" value="P:positive regulation of type I interferon-mediated signaling pathway"/>
    <property type="evidence" value="ECO:0007669"/>
    <property type="project" value="Ensembl"/>
</dbReference>
<dbReference type="GO" id="GO:0039529">
    <property type="term" value="P:RIG-I signaling pathway"/>
    <property type="evidence" value="ECO:0007669"/>
    <property type="project" value="Ensembl"/>
</dbReference>
<dbReference type="GO" id="GO:0034063">
    <property type="term" value="P:stress granule assembly"/>
    <property type="evidence" value="ECO:0000318"/>
    <property type="project" value="GO_Central"/>
</dbReference>
<dbReference type="CDD" id="cd01736">
    <property type="entry name" value="LSm14_N"/>
    <property type="match status" value="1"/>
</dbReference>
<dbReference type="FunFam" id="2.30.30.100:FF:000006">
    <property type="entry name" value="Protein LSM14 homolog A isoform b"/>
    <property type="match status" value="1"/>
</dbReference>
<dbReference type="Gene3D" id="2.30.30.100">
    <property type="match status" value="1"/>
</dbReference>
<dbReference type="InterPro" id="IPR025762">
    <property type="entry name" value="DFDF"/>
</dbReference>
<dbReference type="InterPro" id="IPR019050">
    <property type="entry name" value="FDF_dom"/>
</dbReference>
<dbReference type="InterPro" id="IPR025761">
    <property type="entry name" value="FFD_box"/>
</dbReference>
<dbReference type="InterPro" id="IPR025609">
    <property type="entry name" value="Lsm14-like_N"/>
</dbReference>
<dbReference type="InterPro" id="IPR010920">
    <property type="entry name" value="LSM_dom_sf"/>
</dbReference>
<dbReference type="InterPro" id="IPR047575">
    <property type="entry name" value="Sm"/>
</dbReference>
<dbReference type="InterPro" id="IPR025768">
    <property type="entry name" value="TFG_box"/>
</dbReference>
<dbReference type="PANTHER" id="PTHR13586:SF2">
    <property type="entry name" value="PROTEIN LSM14 HOMOLOG A"/>
    <property type="match status" value="1"/>
</dbReference>
<dbReference type="PANTHER" id="PTHR13586">
    <property type="entry name" value="SCD6 PROTEIN-RELATED"/>
    <property type="match status" value="1"/>
</dbReference>
<dbReference type="Pfam" id="PF09532">
    <property type="entry name" value="FDF"/>
    <property type="match status" value="1"/>
</dbReference>
<dbReference type="Pfam" id="PF12701">
    <property type="entry name" value="LSM14"/>
    <property type="match status" value="1"/>
</dbReference>
<dbReference type="SMART" id="SM01199">
    <property type="entry name" value="FDF"/>
    <property type="match status" value="1"/>
</dbReference>
<dbReference type="SMART" id="SM01271">
    <property type="entry name" value="LSM14"/>
    <property type="match status" value="1"/>
</dbReference>
<dbReference type="SUPFAM" id="SSF50182">
    <property type="entry name" value="Sm-like ribonucleoproteins"/>
    <property type="match status" value="1"/>
</dbReference>
<dbReference type="PROSITE" id="PS51512">
    <property type="entry name" value="DFDF"/>
    <property type="match status" value="1"/>
</dbReference>
<dbReference type="PROSITE" id="PS51513">
    <property type="entry name" value="FFD"/>
    <property type="match status" value="1"/>
</dbReference>
<dbReference type="PROSITE" id="PS52002">
    <property type="entry name" value="SM"/>
    <property type="match status" value="1"/>
</dbReference>
<dbReference type="PROSITE" id="PS51536">
    <property type="entry name" value="TFG"/>
    <property type="match status" value="1"/>
</dbReference>
<accession>Q8ND56</accession>
<accession>B4DTG6</accession>
<accession>Q76LX7</accession>
<accession>Q96AR3</accession>
<accession>Q96K73</accession>
<accession>Q96SN5</accession>
<accession>Q9UFR3</accession>
<name>LS14A_HUMAN</name>
<protein>
    <recommendedName>
        <fullName evidence="19">Protein LSM14 homolog A</fullName>
    </recommendedName>
    <alternativeName>
        <fullName>Protein FAM61A</fullName>
    </alternativeName>
    <alternativeName>
        <fullName>Protein SCD6 homolog</fullName>
    </alternativeName>
    <alternativeName>
        <fullName evidence="20">Putative alpha-synuclein-binding protein</fullName>
        <shortName evidence="20">AlphaSNBP</shortName>
    </alternativeName>
    <alternativeName>
        <fullName evidence="18">RNA-associated protein 55A</fullName>
        <shortName evidence="18">hRAP55</shortName>
        <shortName>hRAP55A</shortName>
    </alternativeName>
</protein>